<proteinExistence type="inferred from homology"/>
<reference key="1">
    <citation type="journal article" date="2008" name="Proc. Natl. Acad. Sci. U.S.A.">
        <title>The genome of Clostridium kluyveri, a strict anaerobe with unique metabolic features.</title>
        <authorList>
            <person name="Seedorf H."/>
            <person name="Fricke W.F."/>
            <person name="Veith B."/>
            <person name="Brueggemann H."/>
            <person name="Liesegang H."/>
            <person name="Strittmatter A."/>
            <person name="Miethke M."/>
            <person name="Buckel W."/>
            <person name="Hinderberger J."/>
            <person name="Li F."/>
            <person name="Hagemeier C."/>
            <person name="Thauer R.K."/>
            <person name="Gottschalk G."/>
        </authorList>
    </citation>
    <scope>NUCLEOTIDE SEQUENCE [LARGE SCALE GENOMIC DNA]</scope>
    <source>
        <strain>ATCC 8527 / DSM 555 / NBRC 12016 / NCIMB 10680 / K1</strain>
    </source>
</reference>
<keyword id="KW-0030">Aminoacyl-tRNA synthetase</keyword>
<keyword id="KW-0067">ATP-binding</keyword>
<keyword id="KW-0963">Cytoplasm</keyword>
<keyword id="KW-0436">Ligase</keyword>
<keyword id="KW-0547">Nucleotide-binding</keyword>
<keyword id="KW-0648">Protein biosynthesis</keyword>
<keyword id="KW-1185">Reference proteome</keyword>
<comment type="catalytic activity">
    <reaction evidence="1">
        <text>tRNA(Gln) + L-glutamine + ATP = L-glutaminyl-tRNA(Gln) + AMP + diphosphate</text>
        <dbReference type="Rhea" id="RHEA:20121"/>
        <dbReference type="Rhea" id="RHEA-COMP:9662"/>
        <dbReference type="Rhea" id="RHEA-COMP:9681"/>
        <dbReference type="ChEBI" id="CHEBI:30616"/>
        <dbReference type="ChEBI" id="CHEBI:33019"/>
        <dbReference type="ChEBI" id="CHEBI:58359"/>
        <dbReference type="ChEBI" id="CHEBI:78442"/>
        <dbReference type="ChEBI" id="CHEBI:78521"/>
        <dbReference type="ChEBI" id="CHEBI:456215"/>
        <dbReference type="EC" id="6.1.1.18"/>
    </reaction>
</comment>
<comment type="subunit">
    <text evidence="1">Monomer.</text>
</comment>
<comment type="subcellular location">
    <subcellularLocation>
        <location evidence="1">Cytoplasm</location>
    </subcellularLocation>
</comment>
<comment type="similarity">
    <text evidence="1">Belongs to the class-I aminoacyl-tRNA synthetase family.</text>
</comment>
<name>SYQ_CLOK5</name>
<gene>
    <name evidence="1" type="primary">glnS</name>
    <name type="ordered locus">CKL_1022</name>
</gene>
<feature type="chain" id="PRO_1000095483" description="Glutamine--tRNA ligase">
    <location>
        <begin position="1"/>
        <end position="556"/>
    </location>
</feature>
<feature type="short sequence motif" description="'HIGH' region" evidence="1">
    <location>
        <begin position="33"/>
        <end position="43"/>
    </location>
</feature>
<feature type="short sequence motif" description="'KMSKS' region" evidence="1">
    <location>
        <begin position="266"/>
        <end position="270"/>
    </location>
</feature>
<feature type="binding site" evidence="1">
    <location>
        <begin position="34"/>
        <end position="36"/>
    </location>
    <ligand>
        <name>ATP</name>
        <dbReference type="ChEBI" id="CHEBI:30616"/>
    </ligand>
</feature>
<feature type="binding site" evidence="1">
    <location>
        <begin position="40"/>
        <end position="46"/>
    </location>
    <ligand>
        <name>ATP</name>
        <dbReference type="ChEBI" id="CHEBI:30616"/>
    </ligand>
</feature>
<feature type="binding site" evidence="1">
    <location>
        <position position="66"/>
    </location>
    <ligand>
        <name>L-glutamine</name>
        <dbReference type="ChEBI" id="CHEBI:58359"/>
    </ligand>
</feature>
<feature type="binding site" evidence="1">
    <location>
        <position position="210"/>
    </location>
    <ligand>
        <name>L-glutamine</name>
        <dbReference type="ChEBI" id="CHEBI:58359"/>
    </ligand>
</feature>
<feature type="binding site" evidence="1">
    <location>
        <position position="229"/>
    </location>
    <ligand>
        <name>ATP</name>
        <dbReference type="ChEBI" id="CHEBI:30616"/>
    </ligand>
</feature>
<feature type="binding site" evidence="1">
    <location>
        <begin position="259"/>
        <end position="260"/>
    </location>
    <ligand>
        <name>ATP</name>
        <dbReference type="ChEBI" id="CHEBI:30616"/>
    </ligand>
</feature>
<feature type="binding site" evidence="1">
    <location>
        <begin position="267"/>
        <end position="269"/>
    </location>
    <ligand>
        <name>ATP</name>
        <dbReference type="ChEBI" id="CHEBI:30616"/>
    </ligand>
</feature>
<organism>
    <name type="scientific">Clostridium kluyveri (strain ATCC 8527 / DSM 555 / NBRC 12016 / NCIMB 10680 / K1)</name>
    <dbReference type="NCBI Taxonomy" id="431943"/>
    <lineage>
        <taxon>Bacteria</taxon>
        <taxon>Bacillati</taxon>
        <taxon>Bacillota</taxon>
        <taxon>Clostridia</taxon>
        <taxon>Eubacteriales</taxon>
        <taxon>Clostridiaceae</taxon>
        <taxon>Clostridium</taxon>
    </lineage>
</organism>
<sequence length="556" mass="64440">MGDNNNSSNFIKNIIIEDLKSGEYEKVVTRFPPEPNGYLHIGHAKSIVLNFSLADEFEGKVNLRFDDTNPSKEDVEYVESIKEDVKWLGYNWDNLCFASSYFERMYEYAVFLIKKGKAYVCDLTADEIREYRGTLTKPGKESPYRNRDVEENFKLFEGMKNGEFKDGEKVLRAKIDMASPNINMRDPVLYRIAHASHHNTGDRWCIYPMYDFAHPLEDAIEGVTHSICTLEFEDHRPLYDWIIQECEIENRPKQIEFARLNMTNTVMSKRKLKQLVDENFVDGWDDPRMPTIAGLRRRGFTPESIRNFCRAIGVSKASSIVDSQMLDYFLRDDLEKEAPRTMAILNPLKVVITNYPEGKTETFKIENNPDDASAGVREVPFSREIYIEQEDFMENPPKKYYRLFPGNEVRLKSAYFIKCTEAIKDKDGNVIELRCTYDPASKGGNSPDGRKVRGTLHWINVDTAIPAEIRLYEPLILEQQEKEGEEDLFLDHVNPNSLKVVKGFVEPDMKHVKSDEKFQFFRHGYFVLDGKCSKNGELVFNRIVSLKSSFKIPENK</sequence>
<dbReference type="EC" id="6.1.1.18" evidence="1"/>
<dbReference type="EMBL" id="CP000673">
    <property type="protein sequence ID" value="EDK33064.1"/>
    <property type="molecule type" value="Genomic_DNA"/>
</dbReference>
<dbReference type="RefSeq" id="WP_012101396.1">
    <property type="nucleotide sequence ID" value="NC_009706.1"/>
</dbReference>
<dbReference type="SMR" id="A5N6Y3"/>
<dbReference type="STRING" id="431943.CKL_1022"/>
<dbReference type="KEGG" id="ckl:CKL_1022"/>
<dbReference type="eggNOG" id="COG0008">
    <property type="taxonomic scope" value="Bacteria"/>
</dbReference>
<dbReference type="HOGENOM" id="CLU_001882_2_3_9"/>
<dbReference type="Proteomes" id="UP000002411">
    <property type="component" value="Chromosome"/>
</dbReference>
<dbReference type="GO" id="GO:0005829">
    <property type="term" value="C:cytosol"/>
    <property type="evidence" value="ECO:0007669"/>
    <property type="project" value="TreeGrafter"/>
</dbReference>
<dbReference type="GO" id="GO:0005524">
    <property type="term" value="F:ATP binding"/>
    <property type="evidence" value="ECO:0007669"/>
    <property type="project" value="UniProtKB-UniRule"/>
</dbReference>
<dbReference type="GO" id="GO:0004819">
    <property type="term" value="F:glutamine-tRNA ligase activity"/>
    <property type="evidence" value="ECO:0007669"/>
    <property type="project" value="UniProtKB-UniRule"/>
</dbReference>
<dbReference type="GO" id="GO:0006425">
    <property type="term" value="P:glutaminyl-tRNA aminoacylation"/>
    <property type="evidence" value="ECO:0007669"/>
    <property type="project" value="InterPro"/>
</dbReference>
<dbReference type="GO" id="GO:0006424">
    <property type="term" value="P:glutamyl-tRNA aminoacylation"/>
    <property type="evidence" value="ECO:0007669"/>
    <property type="project" value="UniProtKB-UniRule"/>
</dbReference>
<dbReference type="CDD" id="cd00807">
    <property type="entry name" value="GlnRS_core"/>
    <property type="match status" value="1"/>
</dbReference>
<dbReference type="FunFam" id="1.10.1160.10:FF:000001">
    <property type="entry name" value="Glutamine--tRNA ligase"/>
    <property type="match status" value="1"/>
</dbReference>
<dbReference type="FunFam" id="2.40.240.10:FF:000001">
    <property type="entry name" value="Glutamine--tRNA ligase"/>
    <property type="match status" value="1"/>
</dbReference>
<dbReference type="FunFam" id="3.90.800.10:FF:000001">
    <property type="entry name" value="Glutamine--tRNA ligase"/>
    <property type="match status" value="1"/>
</dbReference>
<dbReference type="FunFam" id="3.40.50.620:FF:000037">
    <property type="entry name" value="Glutamine--tRNA ligase cytoplasmic"/>
    <property type="match status" value="1"/>
</dbReference>
<dbReference type="Gene3D" id="3.40.50.620">
    <property type="entry name" value="HUPs"/>
    <property type="match status" value="1"/>
</dbReference>
<dbReference type="Gene3D" id="2.40.240.10">
    <property type="entry name" value="Ribosomal Protein L25, Chain P"/>
    <property type="match status" value="2"/>
</dbReference>
<dbReference type="HAMAP" id="MF_00126">
    <property type="entry name" value="Gln_tRNA_synth"/>
    <property type="match status" value="1"/>
</dbReference>
<dbReference type="InterPro" id="IPR001412">
    <property type="entry name" value="aa-tRNA-synth_I_CS"/>
</dbReference>
<dbReference type="InterPro" id="IPR004514">
    <property type="entry name" value="Gln-tRNA-synth"/>
</dbReference>
<dbReference type="InterPro" id="IPR050132">
    <property type="entry name" value="Gln/Glu-tRNA_Ligase"/>
</dbReference>
<dbReference type="InterPro" id="IPR022861">
    <property type="entry name" value="Gln_tRNA_ligase_bac"/>
</dbReference>
<dbReference type="InterPro" id="IPR000924">
    <property type="entry name" value="Glu/Gln-tRNA-synth"/>
</dbReference>
<dbReference type="InterPro" id="IPR020058">
    <property type="entry name" value="Glu/Gln-tRNA-synth_Ib_cat-dom"/>
</dbReference>
<dbReference type="InterPro" id="IPR020059">
    <property type="entry name" value="Glu/Gln-tRNA-synth_Ib_codon-bd"/>
</dbReference>
<dbReference type="InterPro" id="IPR020056">
    <property type="entry name" value="Rbsml_bL25/Gln-tRNA_synth_N"/>
</dbReference>
<dbReference type="InterPro" id="IPR011035">
    <property type="entry name" value="Ribosomal_bL25/Gln-tRNA_synth"/>
</dbReference>
<dbReference type="InterPro" id="IPR014729">
    <property type="entry name" value="Rossmann-like_a/b/a_fold"/>
</dbReference>
<dbReference type="InterPro" id="IPR049437">
    <property type="entry name" value="tRNA-synt_1c_C2"/>
</dbReference>
<dbReference type="NCBIfam" id="TIGR00440">
    <property type="entry name" value="glnS"/>
    <property type="match status" value="1"/>
</dbReference>
<dbReference type="NCBIfam" id="NF011291">
    <property type="entry name" value="PRK14703.1"/>
    <property type="match status" value="1"/>
</dbReference>
<dbReference type="PANTHER" id="PTHR43097:SF5">
    <property type="entry name" value="GLUTAMATE--TRNA LIGASE"/>
    <property type="match status" value="1"/>
</dbReference>
<dbReference type="PANTHER" id="PTHR43097">
    <property type="entry name" value="GLUTAMINE-TRNA LIGASE"/>
    <property type="match status" value="1"/>
</dbReference>
<dbReference type="Pfam" id="PF00749">
    <property type="entry name" value="tRNA-synt_1c"/>
    <property type="match status" value="1"/>
</dbReference>
<dbReference type="Pfam" id="PF03950">
    <property type="entry name" value="tRNA-synt_1c_C"/>
    <property type="match status" value="1"/>
</dbReference>
<dbReference type="Pfam" id="PF20974">
    <property type="entry name" value="tRNA-synt_1c_C2"/>
    <property type="match status" value="1"/>
</dbReference>
<dbReference type="PRINTS" id="PR00987">
    <property type="entry name" value="TRNASYNTHGLU"/>
</dbReference>
<dbReference type="SUPFAM" id="SSF52374">
    <property type="entry name" value="Nucleotidylyl transferase"/>
    <property type="match status" value="1"/>
</dbReference>
<dbReference type="SUPFAM" id="SSF50715">
    <property type="entry name" value="Ribosomal protein L25-like"/>
    <property type="match status" value="1"/>
</dbReference>
<dbReference type="PROSITE" id="PS00178">
    <property type="entry name" value="AA_TRNA_LIGASE_I"/>
    <property type="match status" value="1"/>
</dbReference>
<accession>A5N6Y3</accession>
<evidence type="ECO:0000255" key="1">
    <source>
        <dbReference type="HAMAP-Rule" id="MF_00126"/>
    </source>
</evidence>
<protein>
    <recommendedName>
        <fullName evidence="1">Glutamine--tRNA ligase</fullName>
        <ecNumber evidence="1">6.1.1.18</ecNumber>
    </recommendedName>
    <alternativeName>
        <fullName evidence="1">Glutaminyl-tRNA synthetase</fullName>
        <shortName evidence="1">GlnRS</shortName>
    </alternativeName>
</protein>